<keyword id="KW-1185">Reference proteome</keyword>
<keyword id="KW-0687">Ribonucleoprotein</keyword>
<keyword id="KW-0689">Ribosomal protein</keyword>
<organism>
    <name type="scientific">Debaryomyces hansenii (strain ATCC 36239 / CBS 767 / BCRC 21394 / JCM 1990 / NBRC 0083 / IGC 2968)</name>
    <name type="common">Yeast</name>
    <name type="synonym">Torulaspora hansenii</name>
    <dbReference type="NCBI Taxonomy" id="284592"/>
    <lineage>
        <taxon>Eukaryota</taxon>
        <taxon>Fungi</taxon>
        <taxon>Dikarya</taxon>
        <taxon>Ascomycota</taxon>
        <taxon>Saccharomycotina</taxon>
        <taxon>Pichiomycetes</taxon>
        <taxon>Debaryomycetaceae</taxon>
        <taxon>Debaryomyces</taxon>
    </lineage>
</organism>
<gene>
    <name type="primary">RPL44</name>
    <name type="ordered locus">DEHA2F12826g</name>
</gene>
<feature type="initiator methionine" description="Removed" evidence="1">
    <location>
        <position position="1"/>
    </location>
</feature>
<feature type="chain" id="PRO_0000260178" description="Large ribosomal subunit protein eL42">
    <location>
        <begin position="2"/>
        <end position="106"/>
    </location>
</feature>
<protein>
    <recommendedName>
        <fullName evidence="2">Large ribosomal subunit protein eL42</fullName>
    </recommendedName>
    <alternativeName>
        <fullName>60S ribosomal protein L44</fullName>
    </alternativeName>
</protein>
<accession>Q6BLK0</accession>
<evidence type="ECO:0000250" key="1"/>
<evidence type="ECO:0000305" key="2"/>
<reference key="1">
    <citation type="journal article" date="2004" name="Nature">
        <title>Genome evolution in yeasts.</title>
        <authorList>
            <person name="Dujon B."/>
            <person name="Sherman D."/>
            <person name="Fischer G."/>
            <person name="Durrens P."/>
            <person name="Casaregola S."/>
            <person name="Lafontaine I."/>
            <person name="de Montigny J."/>
            <person name="Marck C."/>
            <person name="Neuveglise C."/>
            <person name="Talla E."/>
            <person name="Goffard N."/>
            <person name="Frangeul L."/>
            <person name="Aigle M."/>
            <person name="Anthouard V."/>
            <person name="Babour A."/>
            <person name="Barbe V."/>
            <person name="Barnay S."/>
            <person name="Blanchin S."/>
            <person name="Beckerich J.-M."/>
            <person name="Beyne E."/>
            <person name="Bleykasten C."/>
            <person name="Boisrame A."/>
            <person name="Boyer J."/>
            <person name="Cattolico L."/>
            <person name="Confanioleri F."/>
            <person name="de Daruvar A."/>
            <person name="Despons L."/>
            <person name="Fabre E."/>
            <person name="Fairhead C."/>
            <person name="Ferry-Dumazet H."/>
            <person name="Groppi A."/>
            <person name="Hantraye F."/>
            <person name="Hennequin C."/>
            <person name="Jauniaux N."/>
            <person name="Joyet P."/>
            <person name="Kachouri R."/>
            <person name="Kerrest A."/>
            <person name="Koszul R."/>
            <person name="Lemaire M."/>
            <person name="Lesur I."/>
            <person name="Ma L."/>
            <person name="Muller H."/>
            <person name="Nicaud J.-M."/>
            <person name="Nikolski M."/>
            <person name="Oztas S."/>
            <person name="Ozier-Kalogeropoulos O."/>
            <person name="Pellenz S."/>
            <person name="Potier S."/>
            <person name="Richard G.-F."/>
            <person name="Straub M.-L."/>
            <person name="Suleau A."/>
            <person name="Swennen D."/>
            <person name="Tekaia F."/>
            <person name="Wesolowski-Louvel M."/>
            <person name="Westhof E."/>
            <person name="Wirth B."/>
            <person name="Zeniou-Meyer M."/>
            <person name="Zivanovic Y."/>
            <person name="Bolotin-Fukuhara M."/>
            <person name="Thierry A."/>
            <person name="Bouchier C."/>
            <person name="Caudron B."/>
            <person name="Scarpelli C."/>
            <person name="Gaillardin C."/>
            <person name="Weissenbach J."/>
            <person name="Wincker P."/>
            <person name="Souciet J.-L."/>
        </authorList>
    </citation>
    <scope>NUCLEOTIDE SEQUENCE [LARGE SCALE GENOMIC DNA]</scope>
    <source>
        <strain>ATCC 36239 / CBS 767 / BCRC 21394 / JCM 1990 / NBRC 0083 / IGC 2968</strain>
    </source>
</reference>
<sequence>MVNVPKTRRTYCKGKECRKHTQHKVTQYKAGKASLFAQGKRRYDRKQKGYGGQTKPVFHKKAKTTKKVVLRLECVVCKTKAQLSLKRCKHFELGGDKKQKGQALQF</sequence>
<comment type="similarity">
    <text evidence="2">Belongs to the eukaryotic ribosomal protein eL42 family.</text>
</comment>
<dbReference type="EMBL" id="CR382138">
    <property type="protein sequence ID" value="CAG89274.1"/>
    <property type="molecule type" value="Genomic_DNA"/>
</dbReference>
<dbReference type="RefSeq" id="XP_460921.1">
    <property type="nucleotide sequence ID" value="XM_460921.1"/>
</dbReference>
<dbReference type="SMR" id="Q6BLK0"/>
<dbReference type="FunCoup" id="Q6BLK0">
    <property type="interactions" value="735"/>
</dbReference>
<dbReference type="STRING" id="284592.Q6BLK0"/>
<dbReference type="GeneID" id="2904250"/>
<dbReference type="KEGG" id="dha:DEHA2F12826g"/>
<dbReference type="VEuPathDB" id="FungiDB:DEHA2F12826g"/>
<dbReference type="eggNOG" id="KOG3464">
    <property type="taxonomic scope" value="Eukaryota"/>
</dbReference>
<dbReference type="HOGENOM" id="CLU_114645_2_1_1"/>
<dbReference type="InParanoid" id="Q6BLK0"/>
<dbReference type="OMA" id="CKKHTIH"/>
<dbReference type="OrthoDB" id="2967263at2759"/>
<dbReference type="Proteomes" id="UP000000599">
    <property type="component" value="Chromosome F"/>
</dbReference>
<dbReference type="GO" id="GO:1990904">
    <property type="term" value="C:ribonucleoprotein complex"/>
    <property type="evidence" value="ECO:0007669"/>
    <property type="project" value="UniProtKB-KW"/>
</dbReference>
<dbReference type="GO" id="GO:0005840">
    <property type="term" value="C:ribosome"/>
    <property type="evidence" value="ECO:0007669"/>
    <property type="project" value="UniProtKB-KW"/>
</dbReference>
<dbReference type="GO" id="GO:0003735">
    <property type="term" value="F:structural constituent of ribosome"/>
    <property type="evidence" value="ECO:0007669"/>
    <property type="project" value="InterPro"/>
</dbReference>
<dbReference type="GO" id="GO:0006412">
    <property type="term" value="P:translation"/>
    <property type="evidence" value="ECO:0007669"/>
    <property type="project" value="InterPro"/>
</dbReference>
<dbReference type="FunFam" id="3.10.450.80:FF:000001">
    <property type="entry name" value="60S ribosomal protein L44"/>
    <property type="match status" value="1"/>
</dbReference>
<dbReference type="Gene3D" id="3.10.450.80">
    <property type="match status" value="1"/>
</dbReference>
<dbReference type="InterPro" id="IPR000552">
    <property type="entry name" value="Ribosomal_eL44"/>
</dbReference>
<dbReference type="InterPro" id="IPR053708">
    <property type="entry name" value="Ribosomal_LSU_eL42"/>
</dbReference>
<dbReference type="InterPro" id="IPR011332">
    <property type="entry name" value="Ribosomal_zn-bd"/>
</dbReference>
<dbReference type="PANTHER" id="PTHR10369">
    <property type="entry name" value="60S RIBOSOMAL PROTEIN L36A/L44"/>
    <property type="match status" value="1"/>
</dbReference>
<dbReference type="Pfam" id="PF00935">
    <property type="entry name" value="Ribosomal_L44"/>
    <property type="match status" value="1"/>
</dbReference>
<dbReference type="SUPFAM" id="SSF57829">
    <property type="entry name" value="Zn-binding ribosomal proteins"/>
    <property type="match status" value="1"/>
</dbReference>
<dbReference type="PROSITE" id="PS01172">
    <property type="entry name" value="RIBOSOMAL_L44E"/>
    <property type="match status" value="1"/>
</dbReference>
<proteinExistence type="inferred from homology"/>
<name>RL44_DEBHA</name>